<protein>
    <recommendedName>
        <fullName evidence="1">Small ribosomal subunit protein eS31</fullName>
    </recommendedName>
    <alternativeName>
        <fullName evidence="2">30S ribosomal protein S27ae</fullName>
    </alternativeName>
</protein>
<accession>A6US53</accession>
<sequence>MAAAKGKKGAKAPSTKKSDYYKVEGNSVTRTKKACPKCGAGVFMAEHLNRYACGKCGFLEYKKNEKTEEQE</sequence>
<keyword id="KW-0479">Metal-binding</keyword>
<keyword id="KW-0687">Ribonucleoprotein</keyword>
<keyword id="KW-0689">Ribosomal protein</keyword>
<keyword id="KW-0862">Zinc</keyword>
<keyword id="KW-0863">Zinc-finger</keyword>
<name>RS27A_METVS</name>
<proteinExistence type="inferred from homology"/>
<feature type="chain" id="PRO_1000046818" description="Small ribosomal subunit protein eS31">
    <location>
        <begin position="1"/>
        <end position="71"/>
    </location>
</feature>
<feature type="zinc finger region" description="C4-type" evidence="1">
    <location>
        <begin position="35"/>
        <end position="56"/>
    </location>
</feature>
<feature type="binding site" evidence="1">
    <location>
        <position position="35"/>
    </location>
    <ligand>
        <name>Zn(2+)</name>
        <dbReference type="ChEBI" id="CHEBI:29105"/>
    </ligand>
</feature>
<feature type="binding site" evidence="1">
    <location>
        <position position="38"/>
    </location>
    <ligand>
        <name>Zn(2+)</name>
        <dbReference type="ChEBI" id="CHEBI:29105"/>
    </ligand>
</feature>
<feature type="binding site" evidence="1">
    <location>
        <position position="53"/>
    </location>
    <ligand>
        <name>Zn(2+)</name>
        <dbReference type="ChEBI" id="CHEBI:29105"/>
    </ligand>
</feature>
<feature type="binding site" evidence="1">
    <location>
        <position position="56"/>
    </location>
    <ligand>
        <name>Zn(2+)</name>
        <dbReference type="ChEBI" id="CHEBI:29105"/>
    </ligand>
</feature>
<reference key="1">
    <citation type="submission" date="2007-06" db="EMBL/GenBank/DDBJ databases">
        <title>Complete sequence of Methanococcus vannielii SB.</title>
        <authorList>
            <consortium name="US DOE Joint Genome Institute"/>
            <person name="Copeland A."/>
            <person name="Lucas S."/>
            <person name="Lapidus A."/>
            <person name="Barry K."/>
            <person name="Glavina del Rio T."/>
            <person name="Dalin E."/>
            <person name="Tice H."/>
            <person name="Pitluck S."/>
            <person name="Chain P."/>
            <person name="Malfatti S."/>
            <person name="Shin M."/>
            <person name="Vergez L."/>
            <person name="Schmutz J."/>
            <person name="Larimer F."/>
            <person name="Land M."/>
            <person name="Hauser L."/>
            <person name="Kyrpides N."/>
            <person name="Anderson I."/>
            <person name="Sieprawska-Lupa M."/>
            <person name="Whitman W.B."/>
            <person name="Richardson P."/>
        </authorList>
    </citation>
    <scope>NUCLEOTIDE SEQUENCE [LARGE SCALE GENOMIC DNA]</scope>
    <source>
        <strain>ATCC 35089 / DSM 1224 / JCM 13029 / OCM 148 / SB</strain>
    </source>
</reference>
<evidence type="ECO:0000255" key="1">
    <source>
        <dbReference type="HAMAP-Rule" id="MF_00777"/>
    </source>
</evidence>
<evidence type="ECO:0000305" key="2"/>
<organism>
    <name type="scientific">Methanococcus vannielii (strain ATCC 35089 / DSM 1224 / JCM 13029 / OCM 148 / SB)</name>
    <dbReference type="NCBI Taxonomy" id="406327"/>
    <lineage>
        <taxon>Archaea</taxon>
        <taxon>Methanobacteriati</taxon>
        <taxon>Methanobacteriota</taxon>
        <taxon>Methanomada group</taxon>
        <taxon>Methanococci</taxon>
        <taxon>Methanococcales</taxon>
        <taxon>Methanococcaceae</taxon>
        <taxon>Methanococcus</taxon>
    </lineage>
</organism>
<dbReference type="EMBL" id="CP000742">
    <property type="protein sequence ID" value="ABR55325.1"/>
    <property type="molecule type" value="Genomic_DNA"/>
</dbReference>
<dbReference type="RefSeq" id="WP_012066239.1">
    <property type="nucleotide sequence ID" value="NC_009634.1"/>
</dbReference>
<dbReference type="SMR" id="A6US53"/>
<dbReference type="STRING" id="406327.Mevan_1429"/>
<dbReference type="GeneID" id="5325154"/>
<dbReference type="KEGG" id="mvn:Mevan_1429"/>
<dbReference type="eggNOG" id="arCOG04183">
    <property type="taxonomic scope" value="Archaea"/>
</dbReference>
<dbReference type="HOGENOM" id="CLU_179743_2_0_2"/>
<dbReference type="OrthoDB" id="25142at2157"/>
<dbReference type="Proteomes" id="UP000001107">
    <property type="component" value="Chromosome"/>
</dbReference>
<dbReference type="GO" id="GO:1990904">
    <property type="term" value="C:ribonucleoprotein complex"/>
    <property type="evidence" value="ECO:0007669"/>
    <property type="project" value="UniProtKB-KW"/>
</dbReference>
<dbReference type="GO" id="GO:0005840">
    <property type="term" value="C:ribosome"/>
    <property type="evidence" value="ECO:0007669"/>
    <property type="project" value="UniProtKB-KW"/>
</dbReference>
<dbReference type="GO" id="GO:0003735">
    <property type="term" value="F:structural constituent of ribosome"/>
    <property type="evidence" value="ECO:0007669"/>
    <property type="project" value="InterPro"/>
</dbReference>
<dbReference type="GO" id="GO:0008270">
    <property type="term" value="F:zinc ion binding"/>
    <property type="evidence" value="ECO:0007669"/>
    <property type="project" value="UniProtKB-UniRule"/>
</dbReference>
<dbReference type="GO" id="GO:0006412">
    <property type="term" value="P:translation"/>
    <property type="evidence" value="ECO:0007669"/>
    <property type="project" value="UniProtKB-UniRule"/>
</dbReference>
<dbReference type="Gene3D" id="6.20.50.180">
    <property type="match status" value="1"/>
</dbReference>
<dbReference type="HAMAP" id="MF_00777">
    <property type="entry name" value="Ribosomal_eS31"/>
    <property type="match status" value="1"/>
</dbReference>
<dbReference type="InterPro" id="IPR002906">
    <property type="entry name" value="Ribosomal_eS31"/>
</dbReference>
<dbReference type="InterPro" id="IPR022845">
    <property type="entry name" value="Ribosomal_eS31_arc"/>
</dbReference>
<dbReference type="InterPro" id="IPR011332">
    <property type="entry name" value="Ribosomal_zn-bd"/>
</dbReference>
<dbReference type="NCBIfam" id="NF001669">
    <property type="entry name" value="PRK00432.1"/>
    <property type="match status" value="1"/>
</dbReference>
<dbReference type="Pfam" id="PF01599">
    <property type="entry name" value="Ribosomal_S27"/>
    <property type="match status" value="1"/>
</dbReference>
<dbReference type="SMART" id="SM01402">
    <property type="entry name" value="Ribosomal_S27"/>
    <property type="match status" value="1"/>
</dbReference>
<dbReference type="SUPFAM" id="SSF57829">
    <property type="entry name" value="Zn-binding ribosomal proteins"/>
    <property type="match status" value="1"/>
</dbReference>
<comment type="cofactor">
    <cofactor evidence="1">
        <name>Zn(2+)</name>
        <dbReference type="ChEBI" id="CHEBI:29105"/>
    </cofactor>
    <text evidence="1">Binds 1 zinc ion per subunit.</text>
</comment>
<comment type="subunit">
    <text evidence="1">Part of the 30S ribosomal subunit.</text>
</comment>
<comment type="similarity">
    <text evidence="1">Belongs to the eukaryotic ribosomal protein eS31 family.</text>
</comment>
<gene>
    <name evidence="1" type="primary">rps27ae</name>
    <name type="ordered locus">Mevan_1429</name>
</gene>